<accession>B1JU46</accession>
<name>RS11_BURO0</name>
<comment type="function">
    <text evidence="1">Located on the platform of the 30S subunit, it bridges several disparate RNA helices of the 16S rRNA. Forms part of the Shine-Dalgarno cleft in the 70S ribosome.</text>
</comment>
<comment type="subunit">
    <text evidence="1">Part of the 30S ribosomal subunit. Interacts with proteins S7 and S18. Binds to IF-3.</text>
</comment>
<comment type="similarity">
    <text evidence="1">Belongs to the universal ribosomal protein uS11 family.</text>
</comment>
<gene>
    <name evidence="1" type="primary">rpsK</name>
    <name type="ordered locus">Bcenmc03_0351</name>
</gene>
<reference key="1">
    <citation type="submission" date="2008-02" db="EMBL/GenBank/DDBJ databases">
        <title>Complete sequence of chromosome 1 of Burkholderia cenocepacia MC0-3.</title>
        <authorList>
            <person name="Copeland A."/>
            <person name="Lucas S."/>
            <person name="Lapidus A."/>
            <person name="Barry K."/>
            <person name="Bruce D."/>
            <person name="Goodwin L."/>
            <person name="Glavina del Rio T."/>
            <person name="Dalin E."/>
            <person name="Tice H."/>
            <person name="Pitluck S."/>
            <person name="Chain P."/>
            <person name="Malfatti S."/>
            <person name="Shin M."/>
            <person name="Vergez L."/>
            <person name="Schmutz J."/>
            <person name="Larimer F."/>
            <person name="Land M."/>
            <person name="Hauser L."/>
            <person name="Kyrpides N."/>
            <person name="Mikhailova N."/>
            <person name="Tiedje J."/>
            <person name="Richardson P."/>
        </authorList>
    </citation>
    <scope>NUCLEOTIDE SEQUENCE [LARGE SCALE GENOMIC DNA]</scope>
    <source>
        <strain>MC0-3</strain>
    </source>
</reference>
<keyword id="KW-0687">Ribonucleoprotein</keyword>
<keyword id="KW-0689">Ribosomal protein</keyword>
<keyword id="KW-0694">RNA-binding</keyword>
<keyword id="KW-0699">rRNA-binding</keyword>
<feature type="chain" id="PRO_1000141062" description="Small ribosomal subunit protein uS11">
    <location>
        <begin position="1"/>
        <end position="133"/>
    </location>
</feature>
<protein>
    <recommendedName>
        <fullName evidence="1">Small ribosomal subunit protein uS11</fullName>
    </recommendedName>
    <alternativeName>
        <fullName evidence="2">30S ribosomal protein S11</fullName>
    </alternativeName>
</protein>
<organism>
    <name type="scientific">Burkholderia orbicola (strain MC0-3)</name>
    <dbReference type="NCBI Taxonomy" id="406425"/>
    <lineage>
        <taxon>Bacteria</taxon>
        <taxon>Pseudomonadati</taxon>
        <taxon>Pseudomonadota</taxon>
        <taxon>Betaproteobacteria</taxon>
        <taxon>Burkholderiales</taxon>
        <taxon>Burkholderiaceae</taxon>
        <taxon>Burkholderia</taxon>
        <taxon>Burkholderia cepacia complex</taxon>
        <taxon>Burkholderia orbicola</taxon>
    </lineage>
</organism>
<sequence>MAKASNTAAQRVRKKVKKNVAEGVVHVHASFNNTIITITDRQGNALAWATSGGQGFKGSRKSTPFAAQVAAESAGRVAMEYGVKNLEVRIKGPGPGRESAVRALHGLGIKITAISDVTPIPHNGCRPPKRRRI</sequence>
<proteinExistence type="inferred from homology"/>
<dbReference type="EMBL" id="CP000958">
    <property type="protein sequence ID" value="ACA89531.1"/>
    <property type="molecule type" value="Genomic_DNA"/>
</dbReference>
<dbReference type="RefSeq" id="WP_004197937.1">
    <property type="nucleotide sequence ID" value="NC_010508.1"/>
</dbReference>
<dbReference type="SMR" id="B1JU46"/>
<dbReference type="GeneID" id="98107136"/>
<dbReference type="KEGG" id="bcm:Bcenmc03_0351"/>
<dbReference type="HOGENOM" id="CLU_072439_5_0_4"/>
<dbReference type="Proteomes" id="UP000002169">
    <property type="component" value="Chromosome 1"/>
</dbReference>
<dbReference type="GO" id="GO:1990904">
    <property type="term" value="C:ribonucleoprotein complex"/>
    <property type="evidence" value="ECO:0007669"/>
    <property type="project" value="UniProtKB-KW"/>
</dbReference>
<dbReference type="GO" id="GO:0005840">
    <property type="term" value="C:ribosome"/>
    <property type="evidence" value="ECO:0007669"/>
    <property type="project" value="UniProtKB-KW"/>
</dbReference>
<dbReference type="GO" id="GO:0019843">
    <property type="term" value="F:rRNA binding"/>
    <property type="evidence" value="ECO:0007669"/>
    <property type="project" value="UniProtKB-UniRule"/>
</dbReference>
<dbReference type="GO" id="GO:0003735">
    <property type="term" value="F:structural constituent of ribosome"/>
    <property type="evidence" value="ECO:0007669"/>
    <property type="project" value="InterPro"/>
</dbReference>
<dbReference type="GO" id="GO:0006412">
    <property type="term" value="P:translation"/>
    <property type="evidence" value="ECO:0007669"/>
    <property type="project" value="UniProtKB-UniRule"/>
</dbReference>
<dbReference type="FunFam" id="3.30.420.80:FF:000001">
    <property type="entry name" value="30S ribosomal protein S11"/>
    <property type="match status" value="1"/>
</dbReference>
<dbReference type="Gene3D" id="3.30.420.80">
    <property type="entry name" value="Ribosomal protein S11"/>
    <property type="match status" value="1"/>
</dbReference>
<dbReference type="HAMAP" id="MF_01310">
    <property type="entry name" value="Ribosomal_uS11"/>
    <property type="match status" value="1"/>
</dbReference>
<dbReference type="InterPro" id="IPR001971">
    <property type="entry name" value="Ribosomal_uS11"/>
</dbReference>
<dbReference type="InterPro" id="IPR019981">
    <property type="entry name" value="Ribosomal_uS11_bac-type"/>
</dbReference>
<dbReference type="InterPro" id="IPR018102">
    <property type="entry name" value="Ribosomal_uS11_CS"/>
</dbReference>
<dbReference type="InterPro" id="IPR036967">
    <property type="entry name" value="Ribosomal_uS11_sf"/>
</dbReference>
<dbReference type="NCBIfam" id="NF003698">
    <property type="entry name" value="PRK05309.1"/>
    <property type="match status" value="1"/>
</dbReference>
<dbReference type="NCBIfam" id="TIGR03632">
    <property type="entry name" value="uS11_bact"/>
    <property type="match status" value="1"/>
</dbReference>
<dbReference type="PANTHER" id="PTHR11759">
    <property type="entry name" value="40S RIBOSOMAL PROTEIN S14/30S RIBOSOMAL PROTEIN S11"/>
    <property type="match status" value="1"/>
</dbReference>
<dbReference type="Pfam" id="PF00411">
    <property type="entry name" value="Ribosomal_S11"/>
    <property type="match status" value="1"/>
</dbReference>
<dbReference type="PIRSF" id="PIRSF002131">
    <property type="entry name" value="Ribosomal_S11"/>
    <property type="match status" value="1"/>
</dbReference>
<dbReference type="SUPFAM" id="SSF53137">
    <property type="entry name" value="Translational machinery components"/>
    <property type="match status" value="1"/>
</dbReference>
<dbReference type="PROSITE" id="PS00054">
    <property type="entry name" value="RIBOSOMAL_S11"/>
    <property type="match status" value="1"/>
</dbReference>
<evidence type="ECO:0000255" key="1">
    <source>
        <dbReference type="HAMAP-Rule" id="MF_01310"/>
    </source>
</evidence>
<evidence type="ECO:0000305" key="2"/>